<sequence length="788" mass="90160">MITVVKRNGRIEPLDITKIQKYTKDATDNLEGVSQSELEVDARLQFRDKITTEEIQQTLIKTAVDKIDIDTPNWSFVASRLFLYDLYHKVSGFTGYRHLKEYFENAEEKGRILKGFKEKFDLEFLNSQIKPERDFQFNYLGIKTLYDRYLLKDANNNPIELPQHMFMSIAMFLAQNEQEPNKIALEFYEVLSKFEAMCATPTLANARTTKHQLSSCYIGSTPDNIEGIFDSYKEMALLSKYGGGIGWDFSLVRSIGSYIDGHKNASAGTIPFLKIANDVAIAVDQLGTRKGAIAVYLEIWHIDVMEFIDLRKNSGDERRRAHDLFPALWVCDLFLKRVLEDAMWTLFDPYECKDLTELYGQDFEKRYLEYEKDPKIIKEYINAKDLWKKILMNYFEAGLPFLAFKDNANRCNPNAHAGIIRSSNLCTEIFQNTAPNHYYMQIEYTDGTIEFFEEKELVTTDSNITKCANKLTSTDILKGKPIYIATKVAKDGQTAVCNLASINLSKINTEEDIKRVVPIMVRLLDNVIDLNFYPNRKVKATNLQNRAIGLGVMGEAQMLAEHQIAWGSKEHLEKIDALMEQISYHAIDTSANLAKEKGVYKDFENSEWSKGIFPIDKANNEALKLTEKGLFNHACDWQGLREKVKANGMRNGYLMAIAPTSSISILVGTTQTIEPIYKKKWFEENLSGLIPVVVPNLNVETWNFYTSAYDIDAKDLIKAAAVRQKWIDQGQSLNVFLRIENASGKTLHDIYTLAWKLGLKSTYYLRSESPSIDEKSVLDRSVECFNCQ</sequence>
<gene>
    <name type="primary">nrdA</name>
    <name type="ordered locus">HP_0680</name>
</gene>
<accession>P55982</accession>
<feature type="chain" id="PRO_0000187215" description="Ribonucleoside-diphosphate reductase subunit alpha">
    <location>
        <begin position="1"/>
        <end position="788"/>
    </location>
</feature>
<feature type="domain" description="ATP-cone" evidence="3">
    <location>
        <begin position="2"/>
        <end position="92"/>
    </location>
</feature>
<feature type="active site" description="Proton acceptor" evidence="1">
    <location>
        <position position="424"/>
    </location>
</feature>
<feature type="active site" description="Cysteine radical intermediate" evidence="1">
    <location>
        <position position="426"/>
    </location>
</feature>
<feature type="active site" description="Proton acceptor" evidence="1">
    <location>
        <position position="428"/>
    </location>
</feature>
<feature type="binding site" evidence="2">
    <location>
        <position position="6"/>
    </location>
    <ligand>
        <name>ATP</name>
        <dbReference type="ChEBI" id="CHEBI:30616"/>
        <note>allosteric activator</note>
    </ligand>
</feature>
<feature type="binding site" evidence="2">
    <location>
        <begin position="12"/>
        <end position="18"/>
    </location>
    <ligand>
        <name>ATP</name>
        <dbReference type="ChEBI" id="CHEBI:30616"/>
        <note>allosteric activator</note>
    </ligand>
</feature>
<feature type="binding site" evidence="2">
    <location>
        <position position="52"/>
    </location>
    <ligand>
        <name>ATP</name>
        <dbReference type="ChEBI" id="CHEBI:30616"/>
        <note>allosteric activator</note>
    </ligand>
</feature>
<feature type="binding site" evidence="2">
    <location>
        <position position="200"/>
    </location>
    <ligand>
        <name>GDP</name>
        <dbReference type="ChEBI" id="CHEBI:58189"/>
    </ligand>
</feature>
<feature type="binding site" evidence="2">
    <location>
        <begin position="223"/>
        <end position="225"/>
    </location>
    <ligand>
        <name>dTTP</name>
        <dbReference type="ChEBI" id="CHEBI:37568"/>
        <note>allosteric effector that controls substrate specificity</note>
    </ligand>
</feature>
<feature type="binding site" evidence="2">
    <location>
        <position position="253"/>
    </location>
    <ligand>
        <name>dTTP</name>
        <dbReference type="ChEBI" id="CHEBI:37568"/>
        <note>allosteric effector that controls substrate specificity</note>
    </ligand>
</feature>
<feature type="binding site" evidence="2">
    <location>
        <position position="424"/>
    </location>
    <ligand>
        <name>GDP</name>
        <dbReference type="ChEBI" id="CHEBI:58189"/>
    </ligand>
</feature>
<feature type="binding site" evidence="2">
    <location>
        <position position="428"/>
    </location>
    <ligand>
        <name>GDP</name>
        <dbReference type="ChEBI" id="CHEBI:58189"/>
    </ligand>
</feature>
<feature type="binding site" evidence="2">
    <location>
        <begin position="661"/>
        <end position="663"/>
    </location>
    <ligand>
        <name>GDP</name>
        <dbReference type="ChEBI" id="CHEBI:58189"/>
    </ligand>
</feature>
<feature type="site" description="Important for hydrogen atom transfer" evidence="1">
    <location>
        <position position="216"/>
    </location>
</feature>
<feature type="site" description="Important for hydrogen atom transfer" evidence="1">
    <location>
        <position position="497"/>
    </location>
</feature>
<feature type="site" description="Important for electron transfer" evidence="1">
    <location>
        <position position="763"/>
    </location>
</feature>
<feature type="site" description="Important for electron transfer" evidence="1">
    <location>
        <position position="764"/>
    </location>
</feature>
<feature type="site" description="Interacts with thioredoxin/glutaredoxin" evidence="1">
    <location>
        <position position="784"/>
    </location>
</feature>
<feature type="site" description="Interacts with thioredoxin/glutaredoxin" evidence="1">
    <location>
        <position position="787"/>
    </location>
</feature>
<feature type="disulfide bond" description="Redox-active" evidence="1">
    <location>
        <begin position="216"/>
        <end position="497"/>
    </location>
</feature>
<proteinExistence type="inferred from homology"/>
<protein>
    <recommendedName>
        <fullName>Ribonucleoside-diphosphate reductase subunit alpha</fullName>
        <ecNumber>1.17.4.1</ecNumber>
    </recommendedName>
    <alternativeName>
        <fullName>Ribonucleotide reductase</fullName>
    </alternativeName>
</protein>
<name>RIR1_HELPY</name>
<evidence type="ECO:0000250" key="1"/>
<evidence type="ECO:0000250" key="2">
    <source>
        <dbReference type="UniProtKB" id="P00452"/>
    </source>
</evidence>
<evidence type="ECO:0000255" key="3">
    <source>
        <dbReference type="PROSITE-ProRule" id="PRU00492"/>
    </source>
</evidence>
<evidence type="ECO:0000305" key="4"/>
<organism>
    <name type="scientific">Helicobacter pylori (strain ATCC 700392 / 26695)</name>
    <name type="common">Campylobacter pylori</name>
    <dbReference type="NCBI Taxonomy" id="85962"/>
    <lineage>
        <taxon>Bacteria</taxon>
        <taxon>Pseudomonadati</taxon>
        <taxon>Campylobacterota</taxon>
        <taxon>Epsilonproteobacteria</taxon>
        <taxon>Campylobacterales</taxon>
        <taxon>Helicobacteraceae</taxon>
        <taxon>Helicobacter</taxon>
    </lineage>
</organism>
<keyword id="KW-0021">Allosteric enzyme</keyword>
<keyword id="KW-0067">ATP-binding</keyword>
<keyword id="KW-0215">Deoxyribonucleotide synthesis</keyword>
<keyword id="KW-1015">Disulfide bond</keyword>
<keyword id="KW-0547">Nucleotide-binding</keyword>
<keyword id="KW-0560">Oxidoreductase</keyword>
<keyword id="KW-1185">Reference proteome</keyword>
<comment type="function">
    <text evidence="1">Provides the precursors necessary for DNA synthesis. Catalyzes the biosynthesis of deoxyribonucleotides from the corresponding ribonucleotides (By similarity).</text>
</comment>
<comment type="catalytic activity">
    <reaction>
        <text>a 2'-deoxyribonucleoside 5'-diphosphate + [thioredoxin]-disulfide + H2O = a ribonucleoside 5'-diphosphate + [thioredoxin]-dithiol</text>
        <dbReference type="Rhea" id="RHEA:23252"/>
        <dbReference type="Rhea" id="RHEA-COMP:10698"/>
        <dbReference type="Rhea" id="RHEA-COMP:10700"/>
        <dbReference type="ChEBI" id="CHEBI:15377"/>
        <dbReference type="ChEBI" id="CHEBI:29950"/>
        <dbReference type="ChEBI" id="CHEBI:50058"/>
        <dbReference type="ChEBI" id="CHEBI:57930"/>
        <dbReference type="ChEBI" id="CHEBI:73316"/>
        <dbReference type="EC" id="1.17.4.1"/>
    </reaction>
</comment>
<comment type="activity regulation">
    <text evidence="1">Under complex allosteric control mediated by deoxynucleoside triphosphates and ATP binding to separate specificity and activation sites on the alpha subunit. The type of nucleotide bound at the specificity site determines substrate preference. It seems probable that ATP makes the enzyme reduce CDP and UDP, dGTP favors ADP reduction and dTTP favors GDP reduction. Stimulated by ATP and inhibited by dATP binding to the activity site (By similarity).</text>
</comment>
<comment type="subunit">
    <text evidence="1">Tetramer of two alpha and two beta subunits.</text>
</comment>
<comment type="similarity">
    <text evidence="4">Belongs to the ribonucleoside diphosphate reductase large chain family.</text>
</comment>
<reference key="1">
    <citation type="journal article" date="1997" name="Nature">
        <title>The complete genome sequence of the gastric pathogen Helicobacter pylori.</title>
        <authorList>
            <person name="Tomb J.-F."/>
            <person name="White O."/>
            <person name="Kerlavage A.R."/>
            <person name="Clayton R.A."/>
            <person name="Sutton G.G."/>
            <person name="Fleischmann R.D."/>
            <person name="Ketchum K.A."/>
            <person name="Klenk H.-P."/>
            <person name="Gill S.R."/>
            <person name="Dougherty B.A."/>
            <person name="Nelson K.E."/>
            <person name="Quackenbush J."/>
            <person name="Zhou L."/>
            <person name="Kirkness E.F."/>
            <person name="Peterson S.N."/>
            <person name="Loftus B.J."/>
            <person name="Richardson D.L."/>
            <person name="Dodson R.J."/>
            <person name="Khalak H.G."/>
            <person name="Glodek A."/>
            <person name="McKenney K."/>
            <person name="FitzGerald L.M."/>
            <person name="Lee N."/>
            <person name="Adams M.D."/>
            <person name="Hickey E.K."/>
            <person name="Berg D.E."/>
            <person name="Gocayne J.D."/>
            <person name="Utterback T.R."/>
            <person name="Peterson J.D."/>
            <person name="Kelley J.M."/>
            <person name="Cotton M.D."/>
            <person name="Weidman J.F."/>
            <person name="Fujii C."/>
            <person name="Bowman C."/>
            <person name="Watthey L."/>
            <person name="Wallin E."/>
            <person name="Hayes W.S."/>
            <person name="Borodovsky M."/>
            <person name="Karp P.D."/>
            <person name="Smith H.O."/>
            <person name="Fraser C.M."/>
            <person name="Venter J.C."/>
        </authorList>
    </citation>
    <scope>NUCLEOTIDE SEQUENCE [LARGE SCALE GENOMIC DNA]</scope>
    <source>
        <strain>ATCC 700392 / 26695</strain>
    </source>
</reference>
<dbReference type="EC" id="1.17.4.1"/>
<dbReference type="EMBL" id="AE000511">
    <property type="protein sequence ID" value="AAD14884.1"/>
    <property type="molecule type" value="Genomic_DNA"/>
</dbReference>
<dbReference type="PIR" id="H64604">
    <property type="entry name" value="H64604"/>
</dbReference>
<dbReference type="RefSeq" id="NP_207474.1">
    <property type="nucleotide sequence ID" value="NC_000915.1"/>
</dbReference>
<dbReference type="RefSeq" id="WP_000633984.1">
    <property type="nucleotide sequence ID" value="NC_018939.1"/>
</dbReference>
<dbReference type="SMR" id="P55982"/>
<dbReference type="DIP" id="DIP-3151N"/>
<dbReference type="FunCoup" id="P55982">
    <property type="interactions" value="77"/>
</dbReference>
<dbReference type="IntAct" id="P55982">
    <property type="interactions" value="6"/>
</dbReference>
<dbReference type="MINT" id="P55982"/>
<dbReference type="STRING" id="85962.HP_0680"/>
<dbReference type="PaxDb" id="85962-C694_03505"/>
<dbReference type="EnsemblBacteria" id="AAD14884">
    <property type="protein sequence ID" value="AAD14884"/>
    <property type="gene ID" value="HP_0680"/>
</dbReference>
<dbReference type="KEGG" id="heo:C694_03505"/>
<dbReference type="KEGG" id="hpy:HP_0680"/>
<dbReference type="PATRIC" id="fig|85962.47.peg.728"/>
<dbReference type="eggNOG" id="COG0209">
    <property type="taxonomic scope" value="Bacteria"/>
</dbReference>
<dbReference type="InParanoid" id="P55982"/>
<dbReference type="OrthoDB" id="9762933at2"/>
<dbReference type="PhylomeDB" id="P55982"/>
<dbReference type="Proteomes" id="UP000000429">
    <property type="component" value="Chromosome"/>
</dbReference>
<dbReference type="GO" id="GO:0005971">
    <property type="term" value="C:ribonucleoside-diphosphate reductase complex"/>
    <property type="evidence" value="ECO:0000318"/>
    <property type="project" value="GO_Central"/>
</dbReference>
<dbReference type="GO" id="GO:0005524">
    <property type="term" value="F:ATP binding"/>
    <property type="evidence" value="ECO:0000318"/>
    <property type="project" value="GO_Central"/>
</dbReference>
<dbReference type="GO" id="GO:0004748">
    <property type="term" value="F:ribonucleoside-diphosphate reductase activity, thioredoxin disulfide as acceptor"/>
    <property type="evidence" value="ECO:0000318"/>
    <property type="project" value="GO_Central"/>
</dbReference>
<dbReference type="GO" id="GO:0009263">
    <property type="term" value="P:deoxyribonucleotide biosynthetic process"/>
    <property type="evidence" value="ECO:0000318"/>
    <property type="project" value="GO_Central"/>
</dbReference>
<dbReference type="CDD" id="cd01679">
    <property type="entry name" value="RNR_I"/>
    <property type="match status" value="1"/>
</dbReference>
<dbReference type="Gene3D" id="3.20.70.20">
    <property type="match status" value="1"/>
</dbReference>
<dbReference type="InterPro" id="IPR005144">
    <property type="entry name" value="ATP-cone_dom"/>
</dbReference>
<dbReference type="InterPro" id="IPR013346">
    <property type="entry name" value="NrdE_NrdA_C"/>
</dbReference>
<dbReference type="InterPro" id="IPR000788">
    <property type="entry name" value="RNR_lg_C"/>
</dbReference>
<dbReference type="InterPro" id="IPR013509">
    <property type="entry name" value="RNR_lsu_N"/>
</dbReference>
<dbReference type="InterPro" id="IPR008926">
    <property type="entry name" value="RNR_R1-su_N"/>
</dbReference>
<dbReference type="InterPro" id="IPR039718">
    <property type="entry name" value="Rrm1"/>
</dbReference>
<dbReference type="NCBIfam" id="TIGR02506">
    <property type="entry name" value="NrdE_NrdA"/>
    <property type="match status" value="1"/>
</dbReference>
<dbReference type="NCBIfam" id="NF006279">
    <property type="entry name" value="PRK08447.1"/>
    <property type="match status" value="1"/>
</dbReference>
<dbReference type="PANTHER" id="PTHR11573">
    <property type="entry name" value="RIBONUCLEOSIDE-DIPHOSPHATE REDUCTASE LARGE CHAIN"/>
    <property type="match status" value="1"/>
</dbReference>
<dbReference type="PANTHER" id="PTHR11573:SF6">
    <property type="entry name" value="RIBONUCLEOSIDE-DIPHOSPHATE REDUCTASE LARGE SUBUNIT"/>
    <property type="match status" value="1"/>
</dbReference>
<dbReference type="Pfam" id="PF03477">
    <property type="entry name" value="ATP-cone"/>
    <property type="match status" value="1"/>
</dbReference>
<dbReference type="Pfam" id="PF02867">
    <property type="entry name" value="Ribonuc_red_lgC"/>
    <property type="match status" value="1"/>
</dbReference>
<dbReference type="Pfam" id="PF00317">
    <property type="entry name" value="Ribonuc_red_lgN"/>
    <property type="match status" value="1"/>
</dbReference>
<dbReference type="PRINTS" id="PR01183">
    <property type="entry name" value="RIBORDTASEM1"/>
</dbReference>
<dbReference type="SUPFAM" id="SSF51998">
    <property type="entry name" value="PFL-like glycyl radical enzymes"/>
    <property type="match status" value="1"/>
</dbReference>
<dbReference type="SUPFAM" id="SSF48168">
    <property type="entry name" value="R1 subunit of ribonucleotide reductase, N-terminal domain"/>
    <property type="match status" value="1"/>
</dbReference>
<dbReference type="PROSITE" id="PS51161">
    <property type="entry name" value="ATP_CONE"/>
    <property type="match status" value="1"/>
</dbReference>
<dbReference type="PROSITE" id="PS00089">
    <property type="entry name" value="RIBORED_LARGE"/>
    <property type="match status" value="1"/>
</dbReference>